<dbReference type="EMBL" id="CR860561">
    <property type="protein sequence ID" value="CAH92686.1"/>
    <property type="molecule type" value="mRNA"/>
</dbReference>
<dbReference type="RefSeq" id="NP_001126574.1">
    <property type="nucleotide sequence ID" value="NM_001133102.1"/>
</dbReference>
<dbReference type="BMRB" id="Q5R6D0"/>
<dbReference type="SMR" id="Q5R6D0"/>
<dbReference type="FunCoup" id="Q5R6D0">
    <property type="interactions" value="2396"/>
</dbReference>
<dbReference type="STRING" id="9601.ENSPPYP00000017177"/>
<dbReference type="Ensembl" id="ENSPPYT00000017876.3">
    <property type="protein sequence ID" value="ENSPPYP00000017177.2"/>
    <property type="gene ID" value="ENSPPYG00000015379.3"/>
</dbReference>
<dbReference type="GeneID" id="100173565"/>
<dbReference type="KEGG" id="pon:100173565"/>
<dbReference type="CTD" id="10923"/>
<dbReference type="eggNOG" id="KOG2712">
    <property type="taxonomic scope" value="Eukaryota"/>
</dbReference>
<dbReference type="GeneTree" id="ENSGT00390000008802"/>
<dbReference type="HOGENOM" id="CLU_104273_1_1_1"/>
<dbReference type="InParanoid" id="Q5R6D0"/>
<dbReference type="OMA" id="VTINEFR"/>
<dbReference type="OrthoDB" id="2505440at2759"/>
<dbReference type="TreeFam" id="TF313859"/>
<dbReference type="Proteomes" id="UP000001595">
    <property type="component" value="Chromosome 5"/>
</dbReference>
<dbReference type="GO" id="GO:0005634">
    <property type="term" value="C:nucleus"/>
    <property type="evidence" value="ECO:0007669"/>
    <property type="project" value="UniProtKB-SubCell"/>
</dbReference>
<dbReference type="GO" id="GO:0003677">
    <property type="term" value="F:DNA binding"/>
    <property type="evidence" value="ECO:0007669"/>
    <property type="project" value="UniProtKB-KW"/>
</dbReference>
<dbReference type="GO" id="GO:0003713">
    <property type="term" value="F:transcription coactivator activity"/>
    <property type="evidence" value="ECO:0007669"/>
    <property type="project" value="InterPro"/>
</dbReference>
<dbReference type="GO" id="GO:0060261">
    <property type="term" value="P:positive regulation of transcription initiation by RNA polymerase II"/>
    <property type="evidence" value="ECO:0007669"/>
    <property type="project" value="InterPro"/>
</dbReference>
<dbReference type="FunFam" id="2.30.31.10:FF:000001">
    <property type="entry name" value="Activated RNA polymerase II transcriptional coactivator p15"/>
    <property type="match status" value="1"/>
</dbReference>
<dbReference type="Gene3D" id="2.30.31.10">
    <property type="entry name" value="Transcriptional Coactivator Pc4, Chain A"/>
    <property type="match status" value="1"/>
</dbReference>
<dbReference type="InterPro" id="IPR003173">
    <property type="entry name" value="PC4_C"/>
</dbReference>
<dbReference type="InterPro" id="IPR009044">
    <property type="entry name" value="ssDNA-bd_transcriptional_reg"/>
</dbReference>
<dbReference type="InterPro" id="IPR045125">
    <property type="entry name" value="Sub1/Tcp4-like"/>
</dbReference>
<dbReference type="PANTHER" id="PTHR13215">
    <property type="entry name" value="RNA POLYMERASE II TRANSCRIPTIONAL COACTIVATOR"/>
    <property type="match status" value="1"/>
</dbReference>
<dbReference type="Pfam" id="PF02229">
    <property type="entry name" value="PC4"/>
    <property type="match status" value="1"/>
</dbReference>
<dbReference type="SUPFAM" id="SSF54447">
    <property type="entry name" value="ssDNA-binding transcriptional regulator domain"/>
    <property type="match status" value="1"/>
</dbReference>
<reference key="1">
    <citation type="submission" date="2004-11" db="EMBL/GenBank/DDBJ databases">
        <authorList>
            <consortium name="The German cDNA consortium"/>
        </authorList>
    </citation>
    <scope>NUCLEOTIDE SEQUENCE [LARGE SCALE MRNA]</scope>
    <source>
        <tissue>Brain cortex</tissue>
    </source>
</reference>
<feature type="chain" id="PRO_0000291884" description="Activated RNA polymerase II transcriptional coactivator p15">
    <location>
        <begin position="1"/>
        <end position="127"/>
    </location>
</feature>
<feature type="region of interest" description="Disordered" evidence="4">
    <location>
        <begin position="1"/>
        <end position="64"/>
    </location>
</feature>
<feature type="region of interest" description="Regulatory" evidence="1">
    <location>
        <begin position="1"/>
        <end position="50"/>
    </location>
</feature>
<feature type="region of interest" description="Interaction with ssDNA" evidence="1">
    <location>
        <begin position="77"/>
        <end position="101"/>
    </location>
</feature>
<feature type="compositionally biased region" description="Low complexity" evidence="4">
    <location>
        <begin position="7"/>
        <end position="16"/>
    </location>
</feature>
<feature type="compositionally biased region" description="Basic and acidic residues" evidence="4">
    <location>
        <begin position="31"/>
        <end position="44"/>
    </location>
</feature>
<feature type="compositionally biased region" description="Low complexity" evidence="4">
    <location>
        <begin position="46"/>
        <end position="57"/>
    </location>
</feature>
<feature type="site" description="Cleavage" evidence="1">
    <location>
        <begin position="50"/>
        <end position="51"/>
    </location>
</feature>
<feature type="modified residue" description="Phosphoserine" evidence="3">
    <location>
        <position position="4"/>
    </location>
</feature>
<feature type="modified residue" description="Phosphoserine" evidence="3">
    <location>
        <position position="9"/>
    </location>
</feature>
<feature type="modified residue" description="Phosphoserine" evidence="3">
    <location>
        <position position="10"/>
    </location>
</feature>
<feature type="modified residue" description="Phosphoserine" evidence="3">
    <location>
        <position position="11"/>
    </location>
</feature>
<feature type="modified residue" description="Phosphoserine" evidence="3">
    <location>
        <position position="13"/>
    </location>
</feature>
<feature type="modified residue" description="Phosphoserine" evidence="3">
    <location>
        <position position="15"/>
    </location>
</feature>
<feature type="modified residue" description="Phosphoserine" evidence="3">
    <location>
        <position position="17"/>
    </location>
</feature>
<feature type="modified residue" description="Phosphoserine" evidence="3">
    <location>
        <position position="19"/>
    </location>
</feature>
<feature type="modified residue" description="N6-acetyllysine" evidence="3">
    <location>
        <position position="35"/>
    </location>
</feature>
<feature type="modified residue" description="N6-acetyllysine" evidence="2">
    <location>
        <position position="53"/>
    </location>
</feature>
<feature type="modified residue" description="Phosphoserine" evidence="3">
    <location>
        <position position="55"/>
    </location>
</feature>
<feature type="modified residue" description="Phosphoserine" evidence="3">
    <location>
        <position position="56"/>
    </location>
</feature>
<feature type="modified residue" description="Phosphoserine" evidence="3">
    <location>
        <position position="57"/>
    </location>
</feature>
<feature type="modified residue" description="Phosphoserine" evidence="3">
    <location>
        <position position="58"/>
    </location>
</feature>
<feature type="modified residue" description="N6-acetyllysine; alternate" evidence="3">
    <location>
        <position position="68"/>
    </location>
</feature>
<feature type="modified residue" description="Phosphoserine" evidence="3">
    <location>
        <position position="118"/>
    </location>
</feature>
<feature type="cross-link" description="Glycyl lysine isopeptide (Lys-Gly) (interchain with G-Cter in SUMO1); alternate" evidence="3">
    <location>
        <position position="68"/>
    </location>
</feature>
<feature type="cross-link" description="Glycyl lysine isopeptide (Lys-Gly) (interchain with G-Cter in SUMO2); alternate" evidence="3">
    <location>
        <position position="68"/>
    </location>
</feature>
<name>TCP4_PONAB</name>
<organism>
    <name type="scientific">Pongo abelii</name>
    <name type="common">Sumatran orangutan</name>
    <name type="synonym">Pongo pygmaeus abelii</name>
    <dbReference type="NCBI Taxonomy" id="9601"/>
    <lineage>
        <taxon>Eukaryota</taxon>
        <taxon>Metazoa</taxon>
        <taxon>Chordata</taxon>
        <taxon>Craniata</taxon>
        <taxon>Vertebrata</taxon>
        <taxon>Euteleostomi</taxon>
        <taxon>Mammalia</taxon>
        <taxon>Eutheria</taxon>
        <taxon>Euarchontoglires</taxon>
        <taxon>Primates</taxon>
        <taxon>Haplorrhini</taxon>
        <taxon>Catarrhini</taxon>
        <taxon>Hominidae</taxon>
        <taxon>Pongo</taxon>
    </lineage>
</organism>
<gene>
    <name type="primary">SUB1</name>
    <name type="synonym">RPO2TC1</name>
</gene>
<sequence>MPKSKELVSSSSSGSDSDSEVDKKLKRKKQVAPEKPVKKQKTGETSRALSSSKQSSSSRDDNMFQIGKMRYVSVRDFKGKVLIDIREYWMDPEGEMKPGRKGISLNPEQWSQLKEQISDIDDAVRKL</sequence>
<proteinExistence type="evidence at transcript level"/>
<keyword id="KW-0007">Acetylation</keyword>
<keyword id="KW-0010">Activator</keyword>
<keyword id="KW-0238">DNA-binding</keyword>
<keyword id="KW-1017">Isopeptide bond</keyword>
<keyword id="KW-0539">Nucleus</keyword>
<keyword id="KW-0597">Phosphoprotein</keyword>
<keyword id="KW-1185">Reference proteome</keyword>
<keyword id="KW-0804">Transcription</keyword>
<keyword id="KW-0805">Transcription regulation</keyword>
<keyword id="KW-0832">Ubl conjugation</keyword>
<protein>
    <recommendedName>
        <fullName>Activated RNA polymerase II transcriptional coactivator p15</fullName>
    </recommendedName>
    <alternativeName>
        <fullName>SUB1 homolog</fullName>
    </alternativeName>
</protein>
<accession>Q5R6D0</accession>
<comment type="function">
    <text evidence="1">General coactivator that functions cooperatively with TAFs and mediates functional interactions between upstream activators and the general transcriptional machinery. May be involved in stabilizing the multiprotein transcription complex. Binds single-stranded DNA. Also binds, in vitro, non-specifically to double-stranded DNA (ds DNA) (By similarity).</text>
</comment>
<comment type="subunit">
    <text evidence="1">Homodimer. Interacts with CSTF2 (By similarity).</text>
</comment>
<comment type="subcellular location">
    <subcellularLocation>
        <location evidence="1">Nucleus</location>
    </subcellularLocation>
</comment>
<comment type="PTM">
    <text evidence="1">Activity is controlled by protein kinases that target the regulatory region. Phosphorylation inactivates both ds DNA-binding and cofactor function, but does not affect binding to ssDNA (By similarity).</text>
</comment>
<comment type="similarity">
    <text evidence="5">Belongs to the transcriptional coactivator PC4 family.</text>
</comment>
<evidence type="ECO:0000250" key="1"/>
<evidence type="ECO:0000250" key="2">
    <source>
        <dbReference type="UniProtKB" id="P11031"/>
    </source>
</evidence>
<evidence type="ECO:0000250" key="3">
    <source>
        <dbReference type="UniProtKB" id="P53999"/>
    </source>
</evidence>
<evidence type="ECO:0000256" key="4">
    <source>
        <dbReference type="SAM" id="MobiDB-lite"/>
    </source>
</evidence>
<evidence type="ECO:0000305" key="5"/>